<proteinExistence type="predicted"/>
<reference key="1">
    <citation type="journal article" date="1998" name="Nature">
        <title>The complete genome of the hyperthermophilic bacterium Aquifex aeolicus.</title>
        <authorList>
            <person name="Deckert G."/>
            <person name="Warren P.V."/>
            <person name="Gaasterland T."/>
            <person name="Young W.G."/>
            <person name="Lenox A.L."/>
            <person name="Graham D.E."/>
            <person name="Overbeek R."/>
            <person name="Snead M.A."/>
            <person name="Keller M."/>
            <person name="Aujay M."/>
            <person name="Huber R."/>
            <person name="Feldman R.A."/>
            <person name="Short J.M."/>
            <person name="Olsen G.J."/>
            <person name="Swanson R.V."/>
        </authorList>
    </citation>
    <scope>NUCLEOTIDE SEQUENCE [LARGE SCALE GENOMIC DNA]</scope>
    <source>
        <strain>VF5</strain>
    </source>
</reference>
<dbReference type="EMBL" id="AE000657">
    <property type="protein sequence ID" value="AAC07807.1"/>
    <property type="molecule type" value="Genomic_DNA"/>
</dbReference>
<dbReference type="PIR" id="H70476">
    <property type="entry name" value="H70476"/>
</dbReference>
<dbReference type="RefSeq" id="NP_214413.1">
    <property type="nucleotide sequence ID" value="NC_000918.1"/>
</dbReference>
<dbReference type="RefSeq" id="WP_010881349.1">
    <property type="nucleotide sequence ID" value="NC_000918.1"/>
</dbReference>
<dbReference type="STRING" id="224324.aq_2063"/>
<dbReference type="EnsemblBacteria" id="AAC07807">
    <property type="protein sequence ID" value="AAC07807"/>
    <property type="gene ID" value="aq_2063"/>
</dbReference>
<dbReference type="KEGG" id="aae:aq_2063"/>
<dbReference type="HOGENOM" id="CLU_2169870_0_0_0"/>
<dbReference type="InParanoid" id="O67844"/>
<dbReference type="OrthoDB" id="15118at2"/>
<dbReference type="Proteomes" id="UP000000798">
    <property type="component" value="Chromosome"/>
</dbReference>
<sequence>MSITHLMRQQVEELFKRFLEKTGLSEEATVYAVFIPKEEEVDEESVDVFEQRVNPKDAESVENFVSRLTKVALENDVKELKLYALVLDRDGETLIIAREENPEADEVIKELIERMKEEV</sequence>
<feature type="chain" id="PRO_0000186967" description="Uncharacterized protein aq_2063">
    <location>
        <begin position="1"/>
        <end position="119"/>
    </location>
</feature>
<gene>
    <name type="ordered locus">aq_2063</name>
</gene>
<accession>O67844</accession>
<name>Y2063_AQUAE</name>
<organism>
    <name type="scientific">Aquifex aeolicus (strain VF5)</name>
    <dbReference type="NCBI Taxonomy" id="224324"/>
    <lineage>
        <taxon>Bacteria</taxon>
        <taxon>Pseudomonadati</taxon>
        <taxon>Aquificota</taxon>
        <taxon>Aquificia</taxon>
        <taxon>Aquificales</taxon>
        <taxon>Aquificaceae</taxon>
        <taxon>Aquifex</taxon>
    </lineage>
</organism>
<protein>
    <recommendedName>
        <fullName>Uncharacterized protein aq_2063</fullName>
    </recommendedName>
</protein>
<keyword id="KW-1185">Reference proteome</keyword>